<organism>
    <name type="scientific">Salmonella paratyphi C (strain RKS4594)</name>
    <dbReference type="NCBI Taxonomy" id="476213"/>
    <lineage>
        <taxon>Bacteria</taxon>
        <taxon>Pseudomonadati</taxon>
        <taxon>Pseudomonadota</taxon>
        <taxon>Gammaproteobacteria</taxon>
        <taxon>Enterobacterales</taxon>
        <taxon>Enterobacteriaceae</taxon>
        <taxon>Salmonella</taxon>
    </lineage>
</organism>
<evidence type="ECO:0000255" key="1">
    <source>
        <dbReference type="HAMAP-Rule" id="MF_01290"/>
    </source>
</evidence>
<accession>C0Q079</accession>
<dbReference type="EC" id="4.1.2.53" evidence="1"/>
<dbReference type="EMBL" id="CP000857">
    <property type="protein sequence ID" value="ACN45583.1"/>
    <property type="molecule type" value="Genomic_DNA"/>
</dbReference>
<dbReference type="SMR" id="C0Q079"/>
<dbReference type="KEGG" id="sei:SPC_1422"/>
<dbReference type="HOGENOM" id="CLU_059964_1_0_6"/>
<dbReference type="Proteomes" id="UP000001599">
    <property type="component" value="Chromosome"/>
</dbReference>
<dbReference type="GO" id="GO:0005737">
    <property type="term" value="C:cytoplasm"/>
    <property type="evidence" value="ECO:0007669"/>
    <property type="project" value="TreeGrafter"/>
</dbReference>
<dbReference type="GO" id="GO:0106099">
    <property type="term" value="F:2-keto-3-deoxy-L-rhamnonate aldolase activity"/>
    <property type="evidence" value="ECO:0007669"/>
    <property type="project" value="UniProtKB-EC"/>
</dbReference>
<dbReference type="GO" id="GO:0000287">
    <property type="term" value="F:magnesium ion binding"/>
    <property type="evidence" value="ECO:0007669"/>
    <property type="project" value="UniProtKB-UniRule"/>
</dbReference>
<dbReference type="FunFam" id="3.20.20.60:FF:000004">
    <property type="entry name" value="5-keto-4-deoxy-D-glucarate aldolase"/>
    <property type="match status" value="1"/>
</dbReference>
<dbReference type="Gene3D" id="3.20.20.60">
    <property type="entry name" value="Phosphoenolpyruvate-binding domains"/>
    <property type="match status" value="1"/>
</dbReference>
<dbReference type="HAMAP" id="MF_01290">
    <property type="entry name" value="KDR_aldolase"/>
    <property type="match status" value="1"/>
</dbReference>
<dbReference type="InterPro" id="IPR005000">
    <property type="entry name" value="Aldolase/citrate-lyase_domain"/>
</dbReference>
<dbReference type="InterPro" id="IPR050251">
    <property type="entry name" value="HpcH-HpaI_aldolase"/>
</dbReference>
<dbReference type="InterPro" id="IPR023593">
    <property type="entry name" value="KDR_aldolase"/>
</dbReference>
<dbReference type="InterPro" id="IPR015813">
    <property type="entry name" value="Pyrv/PenolPyrv_kinase-like_dom"/>
</dbReference>
<dbReference type="InterPro" id="IPR040442">
    <property type="entry name" value="Pyrv_kinase-like_dom_sf"/>
</dbReference>
<dbReference type="NCBIfam" id="NF007521">
    <property type="entry name" value="PRK10128.1"/>
    <property type="match status" value="1"/>
</dbReference>
<dbReference type="PANTHER" id="PTHR30502">
    <property type="entry name" value="2-KETO-3-DEOXY-L-RHAMNONATE ALDOLASE"/>
    <property type="match status" value="1"/>
</dbReference>
<dbReference type="PANTHER" id="PTHR30502:SF5">
    <property type="entry name" value="2-KETO-3-DEOXY-L-RHAMNONATE ALDOLASE"/>
    <property type="match status" value="1"/>
</dbReference>
<dbReference type="Pfam" id="PF03328">
    <property type="entry name" value="HpcH_HpaI"/>
    <property type="match status" value="1"/>
</dbReference>
<dbReference type="SUPFAM" id="SSF51621">
    <property type="entry name" value="Phosphoenolpyruvate/pyruvate domain"/>
    <property type="match status" value="1"/>
</dbReference>
<reference key="1">
    <citation type="journal article" date="2009" name="PLoS ONE">
        <title>Salmonella paratyphi C: genetic divergence from Salmonella choleraesuis and pathogenic convergence with Salmonella typhi.</title>
        <authorList>
            <person name="Liu W.-Q."/>
            <person name="Feng Y."/>
            <person name="Wang Y."/>
            <person name="Zou Q.-H."/>
            <person name="Chen F."/>
            <person name="Guo J.-T."/>
            <person name="Peng Y.-H."/>
            <person name="Jin Y."/>
            <person name="Li Y.-G."/>
            <person name="Hu S.-N."/>
            <person name="Johnston R.N."/>
            <person name="Liu G.-R."/>
            <person name="Liu S.-L."/>
        </authorList>
    </citation>
    <scope>NUCLEOTIDE SEQUENCE [LARGE SCALE GENOMIC DNA]</scope>
    <source>
        <strain>RKS4594</strain>
    </source>
</reference>
<sequence length="267" mass="28727">MNALLSNPFKEGLRKGDTQIGLWLSSTTSYMAEIAATSGYDWLLIDGEHAPNTVQDLYHQLQAIAPYASQPVIRPIEGSKALIKQVLDIGAQTLLIPMVDTAEQARQVVSATRYPPLGQRGVGASVARAARWGRIDNYMAQANESLCLLVQVESKVALENLDAILEVEGIDGVFIGPADLSASLGYPDNAGHPEVQRIIEACIYRIRAAGKAAGFLAVDPAMAQKCLAWGANFVAVGVDTMLYTEALDSRLAMFKSVQSVSTAKRSY</sequence>
<protein>
    <recommendedName>
        <fullName evidence="1">2-keto-3-deoxy-L-rhamnonate aldolase</fullName>
        <shortName evidence="1">KDR aldolase</shortName>
        <ecNumber evidence="1">4.1.2.53</ecNumber>
    </recommendedName>
    <alternativeName>
        <fullName evidence="1">2-dehydro-3-deoxyrhamnonate aldolase</fullName>
    </alternativeName>
</protein>
<feature type="chain" id="PRO_1000165270" description="2-keto-3-deoxy-L-rhamnonate aldolase">
    <location>
        <begin position="1"/>
        <end position="267"/>
    </location>
</feature>
<feature type="active site" description="Proton acceptor" evidence="1">
    <location>
        <position position="49"/>
    </location>
</feature>
<feature type="binding site" evidence="1">
    <location>
        <position position="151"/>
    </location>
    <ligand>
        <name>substrate</name>
    </ligand>
</feature>
<feature type="binding site" evidence="1">
    <location>
        <position position="153"/>
    </location>
    <ligand>
        <name>Mg(2+)</name>
        <dbReference type="ChEBI" id="CHEBI:18420"/>
    </ligand>
</feature>
<feature type="binding site" evidence="1">
    <location>
        <position position="178"/>
    </location>
    <ligand>
        <name>substrate</name>
    </ligand>
</feature>
<feature type="binding site" evidence="1">
    <location>
        <position position="179"/>
    </location>
    <ligand>
        <name>Mg(2+)</name>
        <dbReference type="ChEBI" id="CHEBI:18420"/>
    </ligand>
</feature>
<feature type="binding site" evidence="1">
    <location>
        <position position="179"/>
    </location>
    <ligand>
        <name>substrate</name>
    </ligand>
</feature>
<feature type="site" description="Transition state stabilizer" evidence="1">
    <location>
        <position position="74"/>
    </location>
</feature>
<feature type="site" description="Increases basicity of active site His" evidence="1">
    <location>
        <position position="88"/>
    </location>
</feature>
<keyword id="KW-0456">Lyase</keyword>
<keyword id="KW-0460">Magnesium</keyword>
<keyword id="KW-0479">Metal-binding</keyword>
<name>RHMA_SALPC</name>
<gene>
    <name evidence="1" type="primary">rhmA</name>
    <name type="ordered locus">SPC_1422</name>
</gene>
<comment type="function">
    <text evidence="1">Catalyzes the reversible retro-aldol cleavage of 2-keto-3-deoxy-L-rhamnonate (KDR) to pyruvate and lactaldehyde.</text>
</comment>
<comment type="catalytic activity">
    <reaction evidence="1">
        <text>2-dehydro-3-deoxy-L-rhamnonate = (S)-lactaldehyde + pyruvate</text>
        <dbReference type="Rhea" id="RHEA:25784"/>
        <dbReference type="ChEBI" id="CHEBI:15361"/>
        <dbReference type="ChEBI" id="CHEBI:18041"/>
        <dbReference type="ChEBI" id="CHEBI:58371"/>
        <dbReference type="EC" id="4.1.2.53"/>
    </reaction>
</comment>
<comment type="cofactor">
    <cofactor evidence="1">
        <name>Mg(2+)</name>
        <dbReference type="ChEBI" id="CHEBI:18420"/>
    </cofactor>
    <text evidence="1">Binds 1 Mg(2+) ion per subunit.</text>
</comment>
<comment type="subunit">
    <text evidence="1">Homohexamer.</text>
</comment>
<comment type="similarity">
    <text evidence="1">Belongs to the HpcH/HpaI aldolase family. KDR aldolase subfamily.</text>
</comment>
<proteinExistence type="inferred from homology"/>